<sequence>MSIATATFAFSLFATIAFAVPPETPRIELQAERGLGDKSYAPWQVDCPSNVTWIRNATTGLGSGERAYIEAREKLVQPVIEQMMAARGLETPPRTPNIGVALSGGGYRAMLTGLGGIMGMMNESTEASESETGGWLDGVSYWAGLSGGSWATGTFMSNGGQLPTNLLENLWNIDSNLVFPDDDKLSFYTELYTETNAKSDLGFPIQITDVWGLAIGSHVLPERYQLSNTPNLTFSSLPSVVSALGNASLPMPIIIAADRKRREAGELVIAENATVWEFTPYEFGSWAFGSQYKSPGAFTPIEYLGTSVDDGSPNGTCWKGFDQLSFVMGTSATLFNGAFLELNGTDSGLLTNLITAFLADLGEDQADISRIPNTFSNYNSGENPIYNLTYITLVDAGETNQNIPLEPLLVPTRDVDAIVAFDSSYDTDYIWPNGTALRTTYERAKVLAEHENTRVLMPEVPSMNGFVNGGYNSRPTFFGCNDTTTPLIIYVPSYPWSFAANTSTYQLSYENDEANEMLLNGMRSLTLNHSVPTWPTCFACALTDRSFMYTSENRSTTCQKCFDTWCWAGDDNTTEPATYEPVINSVPPWLVANNLSIGVADAPASNESTAGTASSGAAKADVSMGMVALAAGLGLML</sequence>
<comment type="function">
    <text evidence="3 4">Exhibits phospholipase B (PLB), lysophospholipase (LPL) and lysophospholipase/transacylase (LPTA) activities.</text>
</comment>
<comment type="catalytic activity">
    <reaction evidence="3 6">
        <text>a 1-acyl-sn-glycero-3-phosphocholine + H2O = sn-glycerol 3-phosphocholine + a fatty acid + H(+)</text>
        <dbReference type="Rhea" id="RHEA:15177"/>
        <dbReference type="ChEBI" id="CHEBI:15377"/>
        <dbReference type="ChEBI" id="CHEBI:15378"/>
        <dbReference type="ChEBI" id="CHEBI:16870"/>
        <dbReference type="ChEBI" id="CHEBI:28868"/>
        <dbReference type="ChEBI" id="CHEBI:58168"/>
        <dbReference type="EC" id="3.1.1.5"/>
    </reaction>
</comment>
<comment type="activity regulation">
    <text evidence="3">Inhibited by Fe(3+) ion.</text>
</comment>
<comment type="biophysicochemical properties">
    <phDependence>
        <text evidence="3">Active only at acidic pHs.</text>
    </phDependence>
</comment>
<comment type="subcellular location">
    <subcellularLocation>
        <location evidence="3 4">Secreted</location>
    </subcellularLocation>
    <subcellularLocation>
        <location evidence="4">Cell membrane</location>
        <topology evidence="5">Peripheral membrane protein</topology>
    </subcellularLocation>
    <text evidence="4">Localizes to lipid rafts in the cell membrane prior to secretion.</text>
</comment>
<comment type="PTM">
    <text evidence="3">N-glycosylated.</text>
</comment>
<comment type="similarity">
    <text evidence="5">Belongs to the lysophospholipase family.</text>
</comment>
<comment type="caution">
    <text evidence="5">PubMed:10749672 describes peptide sequences that do not match PLB1, but originate from a copurified, contaminating chitin deacetylase.</text>
</comment>
<comment type="sequence caution" evidence="5">
    <conflict type="erroneous gene model prediction">
        <sequence resource="EMBL-CDS" id="AFR98312"/>
    </conflict>
</comment>
<dbReference type="EC" id="3.1.1.5" evidence="3 6"/>
<dbReference type="EMBL" id="AF223383">
    <property type="protein sequence ID" value="AAF65220.1"/>
    <property type="molecule type" value="Genomic_DNA"/>
</dbReference>
<dbReference type="EMBL" id="CP003831">
    <property type="protein sequence ID" value="AFR98312.2"/>
    <property type="status" value="ALT_SEQ"/>
    <property type="molecule type" value="Genomic_DNA"/>
</dbReference>
<dbReference type="RefSeq" id="XP_012052996.1">
    <property type="nucleotide sequence ID" value="XM_012197606.1"/>
</dbReference>
<dbReference type="SMR" id="Q9P8P2"/>
<dbReference type="GlyCosmos" id="Q9P8P2">
    <property type="glycosylation" value="17 sites, No reported glycans"/>
</dbReference>
<dbReference type="GeneID" id="23889325"/>
<dbReference type="KEGG" id="cng:CNAG_06085"/>
<dbReference type="HOGENOM" id="CLU_014602_0_0_1"/>
<dbReference type="OrthoDB" id="1818at5206"/>
<dbReference type="BRENDA" id="3.1.1.5">
    <property type="organism ID" value="1723"/>
</dbReference>
<dbReference type="PHI-base" id="PHI:228"/>
<dbReference type="PHI-base" id="PHI:2843"/>
<dbReference type="PHI-base" id="PHI:7231"/>
<dbReference type="PHI-base" id="PHI:7259"/>
<dbReference type="PHI-base" id="PHI:9057"/>
<dbReference type="PHI-base" id="PHI:9874"/>
<dbReference type="Proteomes" id="UP000010091">
    <property type="component" value="Chromosome 12"/>
</dbReference>
<dbReference type="GO" id="GO:0005829">
    <property type="term" value="C:cytosol"/>
    <property type="evidence" value="ECO:0007669"/>
    <property type="project" value="TreeGrafter"/>
</dbReference>
<dbReference type="GO" id="GO:0005576">
    <property type="term" value="C:extracellular region"/>
    <property type="evidence" value="ECO:0007669"/>
    <property type="project" value="UniProtKB-SubCell"/>
</dbReference>
<dbReference type="GO" id="GO:0005886">
    <property type="term" value="C:plasma membrane"/>
    <property type="evidence" value="ECO:0007669"/>
    <property type="project" value="UniProtKB-SubCell"/>
</dbReference>
<dbReference type="GO" id="GO:0004622">
    <property type="term" value="F:lysophospholipase activity"/>
    <property type="evidence" value="ECO:0007669"/>
    <property type="project" value="UniProtKB-EC"/>
</dbReference>
<dbReference type="GO" id="GO:0004623">
    <property type="term" value="F:phospholipase A2 activity"/>
    <property type="evidence" value="ECO:0007669"/>
    <property type="project" value="TreeGrafter"/>
</dbReference>
<dbReference type="GO" id="GO:0046475">
    <property type="term" value="P:glycerophospholipid catabolic process"/>
    <property type="evidence" value="ECO:0007669"/>
    <property type="project" value="TreeGrafter"/>
</dbReference>
<dbReference type="FunFam" id="3.40.1090.10:FF:000035">
    <property type="entry name" value="Lysophospholipase"/>
    <property type="match status" value="1"/>
</dbReference>
<dbReference type="Gene3D" id="3.40.1090.10">
    <property type="entry name" value="Cytosolic phospholipase A2 catalytic domain"/>
    <property type="match status" value="1"/>
</dbReference>
<dbReference type="InterPro" id="IPR016035">
    <property type="entry name" value="Acyl_Trfase/lysoPLipase"/>
</dbReference>
<dbReference type="InterPro" id="IPR002642">
    <property type="entry name" value="LysoPLipase_cat_dom"/>
</dbReference>
<dbReference type="PANTHER" id="PTHR10728">
    <property type="entry name" value="CYTOSOLIC PHOSPHOLIPASE A2"/>
    <property type="match status" value="1"/>
</dbReference>
<dbReference type="PANTHER" id="PTHR10728:SF33">
    <property type="entry name" value="LYSOPHOSPHOLIPASE 1-RELATED"/>
    <property type="match status" value="1"/>
</dbReference>
<dbReference type="Pfam" id="PF01735">
    <property type="entry name" value="PLA2_B"/>
    <property type="match status" value="1"/>
</dbReference>
<dbReference type="SMART" id="SM00022">
    <property type="entry name" value="PLAc"/>
    <property type="match status" value="1"/>
</dbReference>
<dbReference type="SUPFAM" id="SSF52151">
    <property type="entry name" value="FabD/lysophospholipase-like"/>
    <property type="match status" value="1"/>
</dbReference>
<dbReference type="PROSITE" id="PS51210">
    <property type="entry name" value="PLA2C"/>
    <property type="match status" value="1"/>
</dbReference>
<evidence type="ECO:0000255" key="1"/>
<evidence type="ECO:0000255" key="2">
    <source>
        <dbReference type="PROSITE-ProRule" id="PRU00555"/>
    </source>
</evidence>
<evidence type="ECO:0000269" key="3">
    <source>
    </source>
</evidence>
<evidence type="ECO:0000269" key="4">
    <source>
    </source>
</evidence>
<evidence type="ECO:0000305" key="5"/>
<evidence type="ECO:0000305" key="6">
    <source>
    </source>
</evidence>
<feature type="signal peptide" evidence="1">
    <location>
        <begin position="1"/>
        <end position="19"/>
    </location>
</feature>
<feature type="chain" id="PRO_0000024636" description="Phospholipase B">
    <location>
        <begin position="20"/>
        <end position="637"/>
    </location>
</feature>
<feature type="domain" description="PLA2c" evidence="2">
    <location>
        <begin position="46"/>
        <end position="572"/>
    </location>
</feature>
<feature type="glycosylation site" description="N-linked (GlcNAc...) asparagine" evidence="1">
    <location>
        <position position="50"/>
    </location>
</feature>
<feature type="glycosylation site" description="N-linked (GlcNAc...) asparagine" evidence="1">
    <location>
        <position position="56"/>
    </location>
</feature>
<feature type="glycosylation site" description="N-linked (GlcNAc...) asparagine" evidence="1">
    <location>
        <position position="122"/>
    </location>
</feature>
<feature type="glycosylation site" description="N-linked (GlcNAc...) asparagine" evidence="1">
    <location>
        <position position="231"/>
    </location>
</feature>
<feature type="glycosylation site" description="N-linked (GlcNAc...) asparagine" evidence="1">
    <location>
        <position position="246"/>
    </location>
</feature>
<feature type="glycosylation site" description="N-linked (GlcNAc...) asparagine" evidence="1">
    <location>
        <position position="272"/>
    </location>
</feature>
<feature type="glycosylation site" description="N-linked (GlcNAc...) asparagine" evidence="1">
    <location>
        <position position="314"/>
    </location>
</feature>
<feature type="glycosylation site" description="N-linked (GlcNAc...) asparagine" evidence="1">
    <location>
        <position position="343"/>
    </location>
</feature>
<feature type="glycosylation site" description="N-linked (GlcNAc...) asparagine" evidence="1">
    <location>
        <position position="387"/>
    </location>
</feature>
<feature type="glycosylation site" description="N-linked (GlcNAc...) asparagine" evidence="1">
    <location>
        <position position="433"/>
    </location>
</feature>
<feature type="glycosylation site" description="N-linked (GlcNAc...) asparagine" evidence="1">
    <location>
        <position position="481"/>
    </location>
</feature>
<feature type="glycosylation site" description="N-linked (GlcNAc...) asparagine" evidence="1">
    <location>
        <position position="501"/>
    </location>
</feature>
<feature type="glycosylation site" description="N-linked (GlcNAc...) asparagine" evidence="1">
    <location>
        <position position="528"/>
    </location>
</feature>
<feature type="glycosylation site" description="N-linked (GlcNAc...) asparagine" evidence="1">
    <location>
        <position position="553"/>
    </location>
</feature>
<feature type="glycosylation site" description="N-linked (GlcNAc...) asparagine" evidence="1">
    <location>
        <position position="572"/>
    </location>
</feature>
<feature type="glycosylation site" description="N-linked (GlcNAc...) asparagine" evidence="1">
    <location>
        <position position="594"/>
    </location>
</feature>
<feature type="glycosylation site" description="N-linked (GlcNAc...) asparagine" evidence="1">
    <location>
        <position position="606"/>
    </location>
</feature>
<feature type="sequence conflict" description="In Ref. 1; AAF65220." evidence="5" ref="1">
    <original>A</original>
    <variation>G</variation>
    <location>
        <position position="6"/>
    </location>
</feature>
<feature type="sequence conflict" description="In Ref. 1; AAF65220." evidence="5" ref="1">
    <original>K</original>
    <variation>N</variation>
    <location>
        <position position="619"/>
    </location>
</feature>
<name>PLB1_CRYNH</name>
<reference key="1">
    <citation type="journal article" date="2001" name="Mol. Microbiol.">
        <title>Extracellular phospholipase activity is a virulence factor for Cryptococcus neoformans.</title>
        <authorList>
            <person name="Cox G.M."/>
            <person name="McDade H.C."/>
            <person name="Chen S.C.A."/>
            <person name="Tucker S.C."/>
            <person name="Gottfredsson M."/>
            <person name="Wright L.C."/>
            <person name="Sorrell T.C."/>
            <person name="Leidich S.D."/>
            <person name="Casadevall A."/>
            <person name="Ghannoum M.A."/>
            <person name="Perfect J.R."/>
        </authorList>
    </citation>
    <scope>NUCLEOTIDE SEQUENCE [GENOMIC DNA]</scope>
    <source>
        <strain>H99 / ATCC 208821 / CBS 10515 / FGSC 9487</strain>
    </source>
</reference>
<reference key="2">
    <citation type="journal article" date="2014" name="PLoS Genet.">
        <title>Analysis of the genome and transcriptome of Cryptococcus neoformans var. grubii reveals complex RNA expression and microevolution leading to virulence attenuation.</title>
        <authorList>
            <person name="Janbon G."/>
            <person name="Ormerod K.L."/>
            <person name="Paulet D."/>
            <person name="Byrnes E.J. III"/>
            <person name="Yadav V."/>
            <person name="Chatterjee G."/>
            <person name="Mullapudi N."/>
            <person name="Hon C.-C."/>
            <person name="Billmyre R.B."/>
            <person name="Brunel F."/>
            <person name="Bahn Y.-S."/>
            <person name="Chen W."/>
            <person name="Chen Y."/>
            <person name="Chow E.W.L."/>
            <person name="Coppee J.-Y."/>
            <person name="Floyd-Averette A."/>
            <person name="Gaillardin C."/>
            <person name="Gerik K.J."/>
            <person name="Goldberg J."/>
            <person name="Gonzalez-Hilarion S."/>
            <person name="Gujja S."/>
            <person name="Hamlin J.L."/>
            <person name="Hsueh Y.-P."/>
            <person name="Ianiri G."/>
            <person name="Jones S."/>
            <person name="Kodira C.D."/>
            <person name="Kozubowski L."/>
            <person name="Lam W."/>
            <person name="Marra M."/>
            <person name="Mesner L.D."/>
            <person name="Mieczkowski P.A."/>
            <person name="Moyrand F."/>
            <person name="Nielsen K."/>
            <person name="Proux C."/>
            <person name="Rossignol T."/>
            <person name="Schein J.E."/>
            <person name="Sun S."/>
            <person name="Wollschlaeger C."/>
            <person name="Wood I.A."/>
            <person name="Zeng Q."/>
            <person name="Neuveglise C."/>
            <person name="Newlon C.S."/>
            <person name="Perfect J.R."/>
            <person name="Lodge J.K."/>
            <person name="Idnurm A."/>
            <person name="Stajich J.E."/>
            <person name="Kronstad J.W."/>
            <person name="Sanyal K."/>
            <person name="Heitman J."/>
            <person name="Fraser J.A."/>
            <person name="Cuomo C.A."/>
            <person name="Dietrich F.S."/>
        </authorList>
    </citation>
    <scope>NUCLEOTIDE SEQUENCE [LARGE SCALE GENOMIC DNA]</scope>
    <source>
        <strain>H99 / ATCC 208821 / CBS 10515 / FGSC 9487</strain>
    </source>
</reference>
<reference key="3">
    <citation type="journal article" date="2000" name="Biochem. J.">
        <title>Purification and characterization of secretory phospholipase B, lysophospholipase and lysophospholipase/transacylase from a virulent strain of the pathogenic fungus Cryptococcus neoformans.</title>
        <authorList>
            <person name="Chen S.C.A."/>
            <person name="Wright L.C."/>
            <person name="Golding J.C."/>
            <person name="Sorrell T.C."/>
        </authorList>
    </citation>
    <scope>FUNCTION</scope>
    <scope>CATALYTIC ACTIVITY</scope>
    <scope>ACTIVITY REGULATION</scope>
    <scope>BIOPHYSICOCHEMICAL PROPERTIES</scope>
    <scope>SUBCELLULAR LOCATION</scope>
    <scope>GLYCOSYLATION</scope>
    <source>
        <strain>BL-1</strain>
    </source>
</reference>
<reference key="4">
    <citation type="journal article" date="2006" name="Eukaryot. Cell">
        <title>Lipid rafts in Cryptococcus neoformans concentrate the virulence determinants phospholipase B1 and Cu/Zn superoxide dismutase.</title>
        <authorList>
            <person name="Siafakas A.R."/>
            <person name="Wright L.C."/>
            <person name="Sorrell T.C."/>
            <person name="Djordjevic J.T."/>
        </authorList>
    </citation>
    <scope>FUNCTION</scope>
    <scope>CATALYTIC ACTIVITY</scope>
    <scope>SUBCELLULAR LOCATION</scope>
</reference>
<proteinExistence type="evidence at protein level"/>
<organism>
    <name type="scientific">Cryptococcus neoformans var. grubii serotype A (strain H99 / ATCC 208821 / CBS 10515 / FGSC 9487)</name>
    <name type="common">Filobasidiella neoformans var. grubii</name>
    <dbReference type="NCBI Taxonomy" id="235443"/>
    <lineage>
        <taxon>Eukaryota</taxon>
        <taxon>Fungi</taxon>
        <taxon>Dikarya</taxon>
        <taxon>Basidiomycota</taxon>
        <taxon>Agaricomycotina</taxon>
        <taxon>Tremellomycetes</taxon>
        <taxon>Tremellales</taxon>
        <taxon>Cryptococcaceae</taxon>
        <taxon>Cryptococcus</taxon>
        <taxon>Cryptococcus neoformans species complex</taxon>
    </lineage>
</organism>
<gene>
    <name type="primary">PLB1</name>
    <name type="ORF">CNAG_06085</name>
</gene>
<keyword id="KW-1003">Cell membrane</keyword>
<keyword id="KW-0325">Glycoprotein</keyword>
<keyword id="KW-0378">Hydrolase</keyword>
<keyword id="KW-0442">Lipid degradation</keyword>
<keyword id="KW-0443">Lipid metabolism</keyword>
<keyword id="KW-0472">Membrane</keyword>
<keyword id="KW-0964">Secreted</keyword>
<keyword id="KW-0732">Signal</keyword>
<accession>Q9P8P2</accession>
<accession>J9VV08</accession>
<protein>
    <recommendedName>
        <fullName>Phospholipase B</fullName>
        <ecNumber evidence="3 6">3.1.1.5</ecNumber>
    </recommendedName>
    <alternativeName>
        <fullName>Lysophospholipase</fullName>
    </alternativeName>
</protein>